<accession>Q0TGT7</accession>
<sequence length="504" mass="55048">MQQSTPYLSFRGIGKTFPGVKALTDISFDCYAGQVHALMGENGAGKSTLLKILSGNYAPTTGSVVINGQEMSFSDTTAALNAGVAIIYQELHLVPEMTVAENIYLGQLPHKGGIVNRSLLNYEAGLQIKHLGMDIDPDTPLKYLSIGQWQMVEIAKALARNAKIIAFDEPTSSLSAREIDNLFRVIRELRKEGRVILYVSHRMEEIFALSDAITVFKDGRYVKTFTDMQQVDHDALVQAMVGRDIGDIYGWQPRSYGEERLRLDAVKAPGVRTPISLAVRSGEIVGLFGLVGAGRSELMKGMFGGTQITAGQVYIDQQPIDIRKPSHAITAGMMLCPEDRKAEGIIPVHSVRDNINISARRKHVLGGCVINNGWEENNADHHIRSLNIKTPGAEQLIMNLSGGNQQKAILGRWLSEEMKVILLDEPTRGIDVGAKHEIYNVIYALAAQGVAVLFASSDLPEVLGVADRIVVMREGEIAGELLHEQADERQALSLAMPKVSQAVA</sequence>
<gene>
    <name evidence="1" type="primary">araG</name>
    <name type="ordered locus">ECP_1841</name>
</gene>
<proteinExistence type="inferred from homology"/>
<dbReference type="EC" id="7.5.2.12" evidence="1"/>
<dbReference type="EMBL" id="CP000247">
    <property type="protein sequence ID" value="ABG69842.1"/>
    <property type="molecule type" value="Genomic_DNA"/>
</dbReference>
<dbReference type="RefSeq" id="WP_001187788.1">
    <property type="nucleotide sequence ID" value="NC_008253.1"/>
</dbReference>
<dbReference type="SMR" id="Q0TGT7"/>
<dbReference type="KEGG" id="ecp:ECP_1841"/>
<dbReference type="HOGENOM" id="CLU_000604_92_3_6"/>
<dbReference type="Proteomes" id="UP000009182">
    <property type="component" value="Chromosome"/>
</dbReference>
<dbReference type="GO" id="GO:0005886">
    <property type="term" value="C:plasma membrane"/>
    <property type="evidence" value="ECO:0007669"/>
    <property type="project" value="UniProtKB-SubCell"/>
</dbReference>
<dbReference type="GO" id="GO:0015612">
    <property type="term" value="F:ABC-type L-arabinose transporter activity"/>
    <property type="evidence" value="ECO:0007669"/>
    <property type="project" value="UniProtKB-EC"/>
</dbReference>
<dbReference type="GO" id="GO:0005524">
    <property type="term" value="F:ATP binding"/>
    <property type="evidence" value="ECO:0007669"/>
    <property type="project" value="UniProtKB-KW"/>
</dbReference>
<dbReference type="GO" id="GO:0016887">
    <property type="term" value="F:ATP hydrolysis activity"/>
    <property type="evidence" value="ECO:0007669"/>
    <property type="project" value="InterPro"/>
</dbReference>
<dbReference type="CDD" id="cd03216">
    <property type="entry name" value="ABC_Carb_Monos_I"/>
    <property type="match status" value="1"/>
</dbReference>
<dbReference type="CDD" id="cd03215">
    <property type="entry name" value="ABC_Carb_Monos_II"/>
    <property type="match status" value="1"/>
</dbReference>
<dbReference type="FunFam" id="3.40.50.300:FF:000126">
    <property type="entry name" value="Galactose/methyl galactoside import ATP-binding protein MglA"/>
    <property type="match status" value="1"/>
</dbReference>
<dbReference type="FunFam" id="3.40.50.300:FF:000127">
    <property type="entry name" value="Ribose import ATP-binding protein RbsA"/>
    <property type="match status" value="1"/>
</dbReference>
<dbReference type="Gene3D" id="3.40.50.300">
    <property type="entry name" value="P-loop containing nucleotide triphosphate hydrolases"/>
    <property type="match status" value="2"/>
</dbReference>
<dbReference type="InterPro" id="IPR003593">
    <property type="entry name" value="AAA+_ATPase"/>
</dbReference>
<dbReference type="InterPro" id="IPR050107">
    <property type="entry name" value="ABC_carbohydrate_import_ATPase"/>
</dbReference>
<dbReference type="InterPro" id="IPR003439">
    <property type="entry name" value="ABC_transporter-like_ATP-bd"/>
</dbReference>
<dbReference type="InterPro" id="IPR017871">
    <property type="entry name" value="ABC_transporter-like_CS"/>
</dbReference>
<dbReference type="InterPro" id="IPR027417">
    <property type="entry name" value="P-loop_NTPase"/>
</dbReference>
<dbReference type="NCBIfam" id="NF008442">
    <property type="entry name" value="PRK11288.1"/>
    <property type="match status" value="1"/>
</dbReference>
<dbReference type="PANTHER" id="PTHR43790:SF6">
    <property type="entry name" value="ARABINOSE IMPORT ATP-BINDING PROTEIN ARAG"/>
    <property type="match status" value="1"/>
</dbReference>
<dbReference type="PANTHER" id="PTHR43790">
    <property type="entry name" value="CARBOHYDRATE TRANSPORT ATP-BINDING PROTEIN MG119-RELATED"/>
    <property type="match status" value="1"/>
</dbReference>
<dbReference type="Pfam" id="PF00005">
    <property type="entry name" value="ABC_tran"/>
    <property type="match status" value="2"/>
</dbReference>
<dbReference type="SMART" id="SM00382">
    <property type="entry name" value="AAA"/>
    <property type="match status" value="2"/>
</dbReference>
<dbReference type="SUPFAM" id="SSF52540">
    <property type="entry name" value="P-loop containing nucleoside triphosphate hydrolases"/>
    <property type="match status" value="2"/>
</dbReference>
<dbReference type="PROSITE" id="PS00211">
    <property type="entry name" value="ABC_TRANSPORTER_1"/>
    <property type="match status" value="1"/>
</dbReference>
<dbReference type="PROSITE" id="PS50893">
    <property type="entry name" value="ABC_TRANSPORTER_2"/>
    <property type="match status" value="2"/>
</dbReference>
<dbReference type="PROSITE" id="PS51268">
    <property type="entry name" value="ARAG"/>
    <property type="match status" value="1"/>
</dbReference>
<keyword id="KW-0067">ATP-binding</keyword>
<keyword id="KW-0997">Cell inner membrane</keyword>
<keyword id="KW-1003">Cell membrane</keyword>
<keyword id="KW-0472">Membrane</keyword>
<keyword id="KW-0547">Nucleotide-binding</keyword>
<keyword id="KW-0677">Repeat</keyword>
<keyword id="KW-0762">Sugar transport</keyword>
<keyword id="KW-1278">Translocase</keyword>
<keyword id="KW-0813">Transport</keyword>
<comment type="function">
    <text evidence="1">Part of the ABC transporter complex AraFGH involved in arabinose import. Responsible for energy coupling to the transport system.</text>
</comment>
<comment type="catalytic activity">
    <reaction evidence="1">
        <text>L-arabinose(out) + ATP + H2O = L-arabinose(in) + ADP + phosphate + H(+)</text>
        <dbReference type="Rhea" id="RHEA:30007"/>
        <dbReference type="ChEBI" id="CHEBI:15377"/>
        <dbReference type="ChEBI" id="CHEBI:15378"/>
        <dbReference type="ChEBI" id="CHEBI:17535"/>
        <dbReference type="ChEBI" id="CHEBI:30616"/>
        <dbReference type="ChEBI" id="CHEBI:43474"/>
        <dbReference type="ChEBI" id="CHEBI:456216"/>
        <dbReference type="EC" id="7.5.2.12"/>
    </reaction>
</comment>
<comment type="subunit">
    <text evidence="1">The complex is composed of two ATP-binding proteins (AraG), two transmembrane proteins (AraH) and a solute-binding protein (AraF).</text>
</comment>
<comment type="subcellular location">
    <subcellularLocation>
        <location evidence="1">Cell inner membrane</location>
        <topology evidence="1">Peripheral membrane protein</topology>
    </subcellularLocation>
</comment>
<comment type="similarity">
    <text evidence="1">Belongs to the ABC transporter superfamily. Arabinose importer (TC 3.A.1.2.2) family.</text>
</comment>
<reference key="1">
    <citation type="journal article" date="2006" name="Mol. Microbiol.">
        <title>Role of pathogenicity island-associated integrases in the genome plasticity of uropathogenic Escherichia coli strain 536.</title>
        <authorList>
            <person name="Hochhut B."/>
            <person name="Wilde C."/>
            <person name="Balling G."/>
            <person name="Middendorf B."/>
            <person name="Dobrindt U."/>
            <person name="Brzuszkiewicz E."/>
            <person name="Gottschalk G."/>
            <person name="Carniel E."/>
            <person name="Hacker J."/>
        </authorList>
    </citation>
    <scope>NUCLEOTIDE SEQUENCE [LARGE SCALE GENOMIC DNA]</scope>
    <source>
        <strain>536 / UPEC</strain>
    </source>
</reference>
<name>ARAG_ECOL5</name>
<feature type="chain" id="PRO_0000270468" description="Arabinose import ATP-binding protein AraG">
    <location>
        <begin position="1"/>
        <end position="504"/>
    </location>
</feature>
<feature type="domain" description="ABC transporter 1" evidence="1">
    <location>
        <begin position="8"/>
        <end position="243"/>
    </location>
</feature>
<feature type="domain" description="ABC transporter 2" evidence="1">
    <location>
        <begin position="256"/>
        <end position="499"/>
    </location>
</feature>
<feature type="binding site" evidence="1">
    <location>
        <begin position="40"/>
        <end position="47"/>
    </location>
    <ligand>
        <name>ATP</name>
        <dbReference type="ChEBI" id="CHEBI:30616"/>
    </ligand>
</feature>
<evidence type="ECO:0000255" key="1">
    <source>
        <dbReference type="HAMAP-Rule" id="MF_01721"/>
    </source>
</evidence>
<organism>
    <name type="scientific">Escherichia coli O6:K15:H31 (strain 536 / UPEC)</name>
    <dbReference type="NCBI Taxonomy" id="362663"/>
    <lineage>
        <taxon>Bacteria</taxon>
        <taxon>Pseudomonadati</taxon>
        <taxon>Pseudomonadota</taxon>
        <taxon>Gammaproteobacteria</taxon>
        <taxon>Enterobacterales</taxon>
        <taxon>Enterobacteriaceae</taxon>
        <taxon>Escherichia</taxon>
    </lineage>
</organism>
<protein>
    <recommendedName>
        <fullName evidence="1">Arabinose import ATP-binding protein AraG</fullName>
        <ecNumber evidence="1">7.5.2.12</ecNumber>
    </recommendedName>
</protein>